<reference key="1">
    <citation type="journal article" date="2004" name="Nat. Biotechnol.">
        <title>The genome sequence of the extreme thermophile Thermus thermophilus.</title>
        <authorList>
            <person name="Henne A."/>
            <person name="Brueggemann H."/>
            <person name="Raasch C."/>
            <person name="Wiezer A."/>
            <person name="Hartsch T."/>
            <person name="Liesegang H."/>
            <person name="Johann A."/>
            <person name="Lienard T."/>
            <person name="Gohl O."/>
            <person name="Martinez-Arias R."/>
            <person name="Jacobi C."/>
            <person name="Starkuviene V."/>
            <person name="Schlenczeck S."/>
            <person name="Dencker S."/>
            <person name="Huber R."/>
            <person name="Klenk H.-P."/>
            <person name="Kramer W."/>
            <person name="Merkl R."/>
            <person name="Gottschalk G."/>
            <person name="Fritz H.-J."/>
        </authorList>
    </citation>
    <scope>NUCLEOTIDE SEQUENCE [LARGE SCALE GENOMIC DNA]</scope>
    <source>
        <strain>ATCC BAA-163 / DSM 7039 / HB27</strain>
    </source>
</reference>
<accession>P61977</accession>
<name>MDH_THET2</name>
<feature type="chain" id="PRO_0000113398" description="Malate dehydrogenase">
    <location>
        <begin position="1"/>
        <end position="327"/>
    </location>
</feature>
<feature type="active site" description="Proton acceptor" evidence="1">
    <location>
        <position position="187"/>
    </location>
</feature>
<feature type="binding site" evidence="1">
    <location>
        <begin position="11"/>
        <end position="17"/>
    </location>
    <ligand>
        <name>NAD(+)</name>
        <dbReference type="ChEBI" id="CHEBI:57540"/>
    </ligand>
</feature>
<feature type="binding site" evidence="1">
    <location>
        <position position="92"/>
    </location>
    <ligand>
        <name>substrate</name>
    </ligand>
</feature>
<feature type="binding site" evidence="1">
    <location>
        <position position="98"/>
    </location>
    <ligand>
        <name>substrate</name>
    </ligand>
</feature>
<feature type="binding site" evidence="1">
    <location>
        <position position="105"/>
    </location>
    <ligand>
        <name>NAD(+)</name>
        <dbReference type="ChEBI" id="CHEBI:57540"/>
    </ligand>
</feature>
<feature type="binding site" evidence="1">
    <location>
        <position position="112"/>
    </location>
    <ligand>
        <name>NAD(+)</name>
        <dbReference type="ChEBI" id="CHEBI:57540"/>
    </ligand>
</feature>
<feature type="binding site" evidence="1">
    <location>
        <begin position="129"/>
        <end position="131"/>
    </location>
    <ligand>
        <name>NAD(+)</name>
        <dbReference type="ChEBI" id="CHEBI:57540"/>
    </ligand>
</feature>
<feature type="binding site" evidence="1">
    <location>
        <position position="131"/>
    </location>
    <ligand>
        <name>substrate</name>
    </ligand>
</feature>
<feature type="binding site" evidence="1">
    <location>
        <position position="162"/>
    </location>
    <ligand>
        <name>substrate</name>
    </ligand>
</feature>
<sequence>MKAPVRVAVTGAAGQIGYSLLFRIAAGEMLGKDQPVILQLLEIPQAMKALEGVVMELEDCAFPLLAGLEATDDPKVAFKDADYALLVGAAPRKAGMERRDLLQVNGKIFTEQGRALAEVAKKDVKVLVVGNPANTNALIAYKNAPGLNPRNFTAMTRLDHNRAKAQLAKKTGTGVDRIRRMTVWGNHSSTMFPDLFHAEVDGRPALELVDMEWYEKVFIPTVAQRGAAIIQARGASSAASAANAAIEHIRDWALGTPEGDWVSMAVPSQGEYGIPEGIVYSFPVTAKDGAYRVVEGLEINEFARKRMEITAQELLDEMEQVKALGLI</sequence>
<evidence type="ECO:0000255" key="1">
    <source>
        <dbReference type="HAMAP-Rule" id="MF_01517"/>
    </source>
</evidence>
<keyword id="KW-0520">NAD</keyword>
<keyword id="KW-0560">Oxidoreductase</keyword>
<keyword id="KW-0816">Tricarboxylic acid cycle</keyword>
<comment type="function">
    <text evidence="1">Catalyzes the reversible oxidation of malate to oxaloacetate.</text>
</comment>
<comment type="catalytic activity">
    <reaction evidence="1">
        <text>(S)-malate + NAD(+) = oxaloacetate + NADH + H(+)</text>
        <dbReference type="Rhea" id="RHEA:21432"/>
        <dbReference type="ChEBI" id="CHEBI:15378"/>
        <dbReference type="ChEBI" id="CHEBI:15589"/>
        <dbReference type="ChEBI" id="CHEBI:16452"/>
        <dbReference type="ChEBI" id="CHEBI:57540"/>
        <dbReference type="ChEBI" id="CHEBI:57945"/>
        <dbReference type="EC" id="1.1.1.37"/>
    </reaction>
</comment>
<comment type="similarity">
    <text evidence="1">Belongs to the LDH/MDH superfamily. MDH type 2 family.</text>
</comment>
<protein>
    <recommendedName>
        <fullName evidence="1">Malate dehydrogenase</fullName>
        <ecNumber evidence="1">1.1.1.37</ecNumber>
    </recommendedName>
</protein>
<proteinExistence type="inferred from homology"/>
<gene>
    <name evidence="1" type="primary">mdh</name>
    <name type="ordered locus">TT_C0168</name>
</gene>
<dbReference type="EC" id="1.1.1.37" evidence="1"/>
<dbReference type="EMBL" id="AE017221">
    <property type="protein sequence ID" value="AAS80516.1"/>
    <property type="molecule type" value="Genomic_DNA"/>
</dbReference>
<dbReference type="RefSeq" id="WP_011172623.1">
    <property type="nucleotide sequence ID" value="NC_005835.1"/>
</dbReference>
<dbReference type="SMR" id="P61977"/>
<dbReference type="GeneID" id="3168364"/>
<dbReference type="KEGG" id="tth:TT_C0168"/>
<dbReference type="eggNOG" id="COG0039">
    <property type="taxonomic scope" value="Bacteria"/>
</dbReference>
<dbReference type="HOGENOM" id="CLU_040727_2_0_0"/>
<dbReference type="OrthoDB" id="9802969at2"/>
<dbReference type="Proteomes" id="UP000000592">
    <property type="component" value="Chromosome"/>
</dbReference>
<dbReference type="GO" id="GO:0030060">
    <property type="term" value="F:L-malate dehydrogenase (NAD+) activity"/>
    <property type="evidence" value="ECO:0007669"/>
    <property type="project" value="UniProtKB-UniRule"/>
</dbReference>
<dbReference type="GO" id="GO:0006108">
    <property type="term" value="P:malate metabolic process"/>
    <property type="evidence" value="ECO:0007669"/>
    <property type="project" value="InterPro"/>
</dbReference>
<dbReference type="GO" id="GO:0006099">
    <property type="term" value="P:tricarboxylic acid cycle"/>
    <property type="evidence" value="ECO:0007669"/>
    <property type="project" value="UniProtKB-UniRule"/>
</dbReference>
<dbReference type="CDD" id="cd01338">
    <property type="entry name" value="MDH_chloroplast-like"/>
    <property type="match status" value="1"/>
</dbReference>
<dbReference type="FunFam" id="3.40.50.720:FF:000010">
    <property type="entry name" value="Malate dehydrogenase"/>
    <property type="match status" value="1"/>
</dbReference>
<dbReference type="FunFam" id="3.90.110.10:FF:000002">
    <property type="entry name" value="Malate dehydrogenase"/>
    <property type="match status" value="1"/>
</dbReference>
<dbReference type="Gene3D" id="3.90.110.10">
    <property type="entry name" value="Lactate dehydrogenase/glycoside hydrolase, family 4, C-terminal"/>
    <property type="match status" value="1"/>
</dbReference>
<dbReference type="Gene3D" id="3.40.50.720">
    <property type="entry name" value="NAD(P)-binding Rossmann-like Domain"/>
    <property type="match status" value="1"/>
</dbReference>
<dbReference type="HAMAP" id="MF_01517">
    <property type="entry name" value="Malate_dehydrog_2"/>
    <property type="match status" value="1"/>
</dbReference>
<dbReference type="InterPro" id="IPR001557">
    <property type="entry name" value="L-lactate/malate_DH"/>
</dbReference>
<dbReference type="InterPro" id="IPR022383">
    <property type="entry name" value="Lactate/malate_DH_C"/>
</dbReference>
<dbReference type="InterPro" id="IPR001236">
    <property type="entry name" value="Lactate/malate_DH_N"/>
</dbReference>
<dbReference type="InterPro" id="IPR015955">
    <property type="entry name" value="Lactate_DH/Glyco_Ohase_4_C"/>
</dbReference>
<dbReference type="InterPro" id="IPR001252">
    <property type="entry name" value="Malate_DH_AS"/>
</dbReference>
<dbReference type="InterPro" id="IPR010945">
    <property type="entry name" value="Malate_DH_type2"/>
</dbReference>
<dbReference type="InterPro" id="IPR036291">
    <property type="entry name" value="NAD(P)-bd_dom_sf"/>
</dbReference>
<dbReference type="NCBIfam" id="TIGR01759">
    <property type="entry name" value="MalateDH-SF1"/>
    <property type="match status" value="1"/>
</dbReference>
<dbReference type="NCBIfam" id="NF003916">
    <property type="entry name" value="PRK05442.1"/>
    <property type="match status" value="1"/>
</dbReference>
<dbReference type="PANTHER" id="PTHR23382">
    <property type="entry name" value="MALATE DEHYDROGENASE"/>
    <property type="match status" value="1"/>
</dbReference>
<dbReference type="Pfam" id="PF02866">
    <property type="entry name" value="Ldh_1_C"/>
    <property type="match status" value="1"/>
</dbReference>
<dbReference type="Pfam" id="PF00056">
    <property type="entry name" value="Ldh_1_N"/>
    <property type="match status" value="1"/>
</dbReference>
<dbReference type="PIRSF" id="PIRSF000102">
    <property type="entry name" value="Lac_mal_DH"/>
    <property type="match status" value="1"/>
</dbReference>
<dbReference type="SUPFAM" id="SSF56327">
    <property type="entry name" value="LDH C-terminal domain-like"/>
    <property type="match status" value="1"/>
</dbReference>
<dbReference type="SUPFAM" id="SSF51735">
    <property type="entry name" value="NAD(P)-binding Rossmann-fold domains"/>
    <property type="match status" value="1"/>
</dbReference>
<dbReference type="PROSITE" id="PS00068">
    <property type="entry name" value="MDH"/>
    <property type="match status" value="1"/>
</dbReference>
<organism>
    <name type="scientific">Thermus thermophilus (strain ATCC BAA-163 / DSM 7039 / HB27)</name>
    <dbReference type="NCBI Taxonomy" id="262724"/>
    <lineage>
        <taxon>Bacteria</taxon>
        <taxon>Thermotogati</taxon>
        <taxon>Deinococcota</taxon>
        <taxon>Deinococci</taxon>
        <taxon>Thermales</taxon>
        <taxon>Thermaceae</taxon>
        <taxon>Thermus</taxon>
    </lineage>
</organism>